<organism>
    <name type="scientific">Perognathus parvus</name>
    <name type="common">Great Basin pocket mouse</name>
    <name type="synonym">Cricetodipus parvus</name>
    <dbReference type="NCBI Taxonomy" id="38671"/>
    <lineage>
        <taxon>Eukaryota</taxon>
        <taxon>Metazoa</taxon>
        <taxon>Chordata</taxon>
        <taxon>Craniata</taxon>
        <taxon>Vertebrata</taxon>
        <taxon>Euteleostomi</taxon>
        <taxon>Mammalia</taxon>
        <taxon>Eutheria</taxon>
        <taxon>Euarchontoglires</taxon>
        <taxon>Glires</taxon>
        <taxon>Rodentia</taxon>
        <taxon>Castorimorpha</taxon>
        <taxon>Heteromyidae</taxon>
        <taxon>Perognathinae</taxon>
        <taxon>Perognathus</taxon>
    </lineage>
</organism>
<geneLocation type="mitochondrion"/>
<feature type="chain" id="PRO_0000257932" description="Cytochrome b">
    <location>
        <begin position="1"/>
        <end position="379"/>
    </location>
</feature>
<feature type="transmembrane region" description="Helical" evidence="2">
    <location>
        <begin position="33"/>
        <end position="53"/>
    </location>
</feature>
<feature type="transmembrane region" description="Helical" evidence="2">
    <location>
        <begin position="77"/>
        <end position="98"/>
    </location>
</feature>
<feature type="transmembrane region" description="Helical" evidence="2">
    <location>
        <begin position="113"/>
        <end position="133"/>
    </location>
</feature>
<feature type="transmembrane region" description="Helical" evidence="2">
    <location>
        <begin position="178"/>
        <end position="198"/>
    </location>
</feature>
<feature type="transmembrane region" description="Helical" evidence="2">
    <location>
        <begin position="226"/>
        <end position="246"/>
    </location>
</feature>
<feature type="transmembrane region" description="Helical" evidence="2">
    <location>
        <begin position="288"/>
        <end position="308"/>
    </location>
</feature>
<feature type="transmembrane region" description="Helical" evidence="2">
    <location>
        <begin position="320"/>
        <end position="340"/>
    </location>
</feature>
<feature type="transmembrane region" description="Helical" evidence="2">
    <location>
        <begin position="347"/>
        <end position="367"/>
    </location>
</feature>
<feature type="binding site" description="axial binding residue" evidence="2">
    <location>
        <position position="83"/>
    </location>
    <ligand>
        <name>heme b</name>
        <dbReference type="ChEBI" id="CHEBI:60344"/>
        <label>b562</label>
    </ligand>
    <ligandPart>
        <name>Fe</name>
        <dbReference type="ChEBI" id="CHEBI:18248"/>
    </ligandPart>
</feature>
<feature type="binding site" description="axial binding residue" evidence="2">
    <location>
        <position position="97"/>
    </location>
    <ligand>
        <name>heme b</name>
        <dbReference type="ChEBI" id="CHEBI:60344"/>
        <label>b566</label>
    </ligand>
    <ligandPart>
        <name>Fe</name>
        <dbReference type="ChEBI" id="CHEBI:18248"/>
    </ligandPart>
</feature>
<feature type="binding site" description="axial binding residue" evidence="2">
    <location>
        <position position="182"/>
    </location>
    <ligand>
        <name>heme b</name>
        <dbReference type="ChEBI" id="CHEBI:60344"/>
        <label>b562</label>
    </ligand>
    <ligandPart>
        <name>Fe</name>
        <dbReference type="ChEBI" id="CHEBI:18248"/>
    </ligandPart>
</feature>
<feature type="binding site" description="axial binding residue" evidence="2">
    <location>
        <position position="196"/>
    </location>
    <ligand>
        <name>heme b</name>
        <dbReference type="ChEBI" id="CHEBI:60344"/>
        <label>b566</label>
    </ligand>
    <ligandPart>
        <name>Fe</name>
        <dbReference type="ChEBI" id="CHEBI:18248"/>
    </ligandPart>
</feature>
<feature type="binding site" evidence="2">
    <location>
        <position position="201"/>
    </location>
    <ligand>
        <name>a ubiquinone</name>
        <dbReference type="ChEBI" id="CHEBI:16389"/>
    </ligand>
</feature>
<keyword id="KW-0249">Electron transport</keyword>
<keyword id="KW-0349">Heme</keyword>
<keyword id="KW-0408">Iron</keyword>
<keyword id="KW-0472">Membrane</keyword>
<keyword id="KW-0479">Metal-binding</keyword>
<keyword id="KW-0496">Mitochondrion</keyword>
<keyword id="KW-0999">Mitochondrion inner membrane</keyword>
<keyword id="KW-0679">Respiratory chain</keyword>
<keyword id="KW-0812">Transmembrane</keyword>
<keyword id="KW-1133">Transmembrane helix</keyword>
<keyword id="KW-0813">Transport</keyword>
<keyword id="KW-0830">Ubiquinone</keyword>
<name>CYB_PERPA</name>
<reference key="1">
    <citation type="journal article" date="2005" name="J. Mammal.">
        <title>Phylogenetics of the new world rodent family Heteromyidae.</title>
        <authorList>
            <person name="Alexander L.F."/>
            <person name="Riddle B.R."/>
        </authorList>
    </citation>
    <scope>NUCLEOTIDE SEQUENCE [GENOMIC DNA]</scope>
    <source>
        <strain>Isolate LVT 1816</strain>
    </source>
</reference>
<sequence length="379" mass="42930">MTIMRKSHPLMKMVNHAFIDLPAPSNISSWWNFGSLLGVCLMIQIMTGLFLSMHYTSDTLTAFSSVTHICRDVNYGWLIRYMHANGASLFFICLYFHIGRGIYYGSYLYKETWNIGIILLFLVMATAFMGYVLPWGQMSFWGATVITNLLSAIPYIGSDLVEWIWGGFSVDKATLNRFFAFHFILPFIIAAMAMVHLLFLHETGSNNPLGIPSDSDKIPFHPYYSFKDLLGVLILFAFFFTIVLFFPDALGDPDNYSPANPLNTPPHIKPEWYFLFAYAILRSIPNKLGGVIALVLSILVLALFPLLHTSNQRSMTFRPISQVMFWILVSDLLILTWIGGQPVEPPFIIIGQAASILYFSIILLLXPIAGLIENKLLKW</sequence>
<protein>
    <recommendedName>
        <fullName>Cytochrome b</fullName>
    </recommendedName>
    <alternativeName>
        <fullName>Complex III subunit 3</fullName>
    </alternativeName>
    <alternativeName>
        <fullName>Complex III subunit III</fullName>
    </alternativeName>
    <alternativeName>
        <fullName>Cytochrome b-c1 complex subunit 3</fullName>
    </alternativeName>
    <alternativeName>
        <fullName>Ubiquinol-cytochrome-c reductase complex cytochrome b subunit</fullName>
    </alternativeName>
</protein>
<proteinExistence type="inferred from homology"/>
<dbReference type="EMBL" id="AY926406">
    <property type="protein sequence ID" value="AAY23249.1"/>
    <property type="molecule type" value="Genomic_DNA"/>
</dbReference>
<dbReference type="GO" id="GO:0005743">
    <property type="term" value="C:mitochondrial inner membrane"/>
    <property type="evidence" value="ECO:0007669"/>
    <property type="project" value="UniProtKB-SubCell"/>
</dbReference>
<dbReference type="GO" id="GO:0045275">
    <property type="term" value="C:respiratory chain complex III"/>
    <property type="evidence" value="ECO:0007669"/>
    <property type="project" value="InterPro"/>
</dbReference>
<dbReference type="GO" id="GO:0046872">
    <property type="term" value="F:metal ion binding"/>
    <property type="evidence" value="ECO:0007669"/>
    <property type="project" value="UniProtKB-KW"/>
</dbReference>
<dbReference type="GO" id="GO:0008121">
    <property type="term" value="F:ubiquinol-cytochrome-c reductase activity"/>
    <property type="evidence" value="ECO:0007669"/>
    <property type="project" value="InterPro"/>
</dbReference>
<dbReference type="GO" id="GO:0006122">
    <property type="term" value="P:mitochondrial electron transport, ubiquinol to cytochrome c"/>
    <property type="evidence" value="ECO:0007669"/>
    <property type="project" value="TreeGrafter"/>
</dbReference>
<dbReference type="CDD" id="cd00290">
    <property type="entry name" value="cytochrome_b_C"/>
    <property type="match status" value="1"/>
</dbReference>
<dbReference type="CDD" id="cd00284">
    <property type="entry name" value="Cytochrome_b_N"/>
    <property type="match status" value="1"/>
</dbReference>
<dbReference type="FunFam" id="1.20.810.10:FF:000002">
    <property type="entry name" value="Cytochrome b"/>
    <property type="match status" value="1"/>
</dbReference>
<dbReference type="Gene3D" id="1.20.810.10">
    <property type="entry name" value="Cytochrome Bc1 Complex, Chain C"/>
    <property type="match status" value="1"/>
</dbReference>
<dbReference type="InterPro" id="IPR005798">
    <property type="entry name" value="Cyt_b/b6_C"/>
</dbReference>
<dbReference type="InterPro" id="IPR036150">
    <property type="entry name" value="Cyt_b/b6_C_sf"/>
</dbReference>
<dbReference type="InterPro" id="IPR005797">
    <property type="entry name" value="Cyt_b/b6_N"/>
</dbReference>
<dbReference type="InterPro" id="IPR027387">
    <property type="entry name" value="Cytb/b6-like_sf"/>
</dbReference>
<dbReference type="InterPro" id="IPR030689">
    <property type="entry name" value="Cytochrome_b"/>
</dbReference>
<dbReference type="InterPro" id="IPR048260">
    <property type="entry name" value="Cytochrome_b_C_euk/bac"/>
</dbReference>
<dbReference type="InterPro" id="IPR048259">
    <property type="entry name" value="Cytochrome_b_N_euk/bac"/>
</dbReference>
<dbReference type="InterPro" id="IPR016174">
    <property type="entry name" value="Di-haem_cyt_TM"/>
</dbReference>
<dbReference type="PANTHER" id="PTHR19271">
    <property type="entry name" value="CYTOCHROME B"/>
    <property type="match status" value="1"/>
</dbReference>
<dbReference type="PANTHER" id="PTHR19271:SF16">
    <property type="entry name" value="CYTOCHROME B"/>
    <property type="match status" value="1"/>
</dbReference>
<dbReference type="Pfam" id="PF00032">
    <property type="entry name" value="Cytochrom_B_C"/>
    <property type="match status" value="1"/>
</dbReference>
<dbReference type="Pfam" id="PF00033">
    <property type="entry name" value="Cytochrome_B"/>
    <property type="match status" value="1"/>
</dbReference>
<dbReference type="PIRSF" id="PIRSF038885">
    <property type="entry name" value="COB"/>
    <property type="match status" value="1"/>
</dbReference>
<dbReference type="SUPFAM" id="SSF81648">
    <property type="entry name" value="a domain/subunit of cytochrome bc1 complex (Ubiquinol-cytochrome c reductase)"/>
    <property type="match status" value="1"/>
</dbReference>
<dbReference type="SUPFAM" id="SSF81342">
    <property type="entry name" value="Transmembrane di-heme cytochromes"/>
    <property type="match status" value="1"/>
</dbReference>
<dbReference type="PROSITE" id="PS51003">
    <property type="entry name" value="CYTB_CTER"/>
    <property type="match status" value="1"/>
</dbReference>
<dbReference type="PROSITE" id="PS51002">
    <property type="entry name" value="CYTB_NTER"/>
    <property type="match status" value="1"/>
</dbReference>
<comment type="function">
    <text evidence="2">Component of the ubiquinol-cytochrome c reductase complex (complex III or cytochrome b-c1 complex) that is part of the mitochondrial respiratory chain. The b-c1 complex mediates electron transfer from ubiquinol to cytochrome c. Contributes to the generation of a proton gradient across the mitochondrial membrane that is then used for ATP synthesis.</text>
</comment>
<comment type="cofactor">
    <cofactor evidence="2">
        <name>heme b</name>
        <dbReference type="ChEBI" id="CHEBI:60344"/>
    </cofactor>
    <text evidence="2">Binds 2 heme b groups non-covalently.</text>
</comment>
<comment type="subunit">
    <text evidence="2">The cytochrome bc1 complex contains 11 subunits: 3 respiratory subunits (MT-CYB, CYC1 and UQCRFS1), 2 core proteins (UQCRC1 and UQCRC2) and 6 low-molecular weight proteins (UQCRH/QCR6, UQCRB/QCR7, UQCRQ/QCR8, UQCR10/QCR9, UQCR11/QCR10 and a cleavage product of UQCRFS1). This cytochrome bc1 complex then forms a dimer.</text>
</comment>
<comment type="subcellular location">
    <subcellularLocation>
        <location evidence="2">Mitochondrion inner membrane</location>
        <topology evidence="2">Multi-pass membrane protein</topology>
    </subcellularLocation>
</comment>
<comment type="miscellaneous">
    <text evidence="1">Heme 1 (or BL or b562) is low-potential and absorbs at about 562 nm, and heme 2 (or BH or b566) is high-potential and absorbs at about 566 nm.</text>
</comment>
<comment type="similarity">
    <text evidence="3 4">Belongs to the cytochrome b family.</text>
</comment>
<comment type="caution">
    <text evidence="2">The full-length protein contains only eight transmembrane helices, not nine as predicted by bioinformatics tools.</text>
</comment>
<evidence type="ECO:0000250" key="1"/>
<evidence type="ECO:0000250" key="2">
    <source>
        <dbReference type="UniProtKB" id="P00157"/>
    </source>
</evidence>
<evidence type="ECO:0000255" key="3">
    <source>
        <dbReference type="PROSITE-ProRule" id="PRU00967"/>
    </source>
</evidence>
<evidence type="ECO:0000255" key="4">
    <source>
        <dbReference type="PROSITE-ProRule" id="PRU00968"/>
    </source>
</evidence>
<accession>Q508J7</accession>
<gene>
    <name type="primary">MT-CYB</name>
    <name type="synonym">COB</name>
    <name type="synonym">CYTB</name>
    <name type="synonym">MTCYB</name>
</gene>